<proteinExistence type="inferred from homology"/>
<organism>
    <name type="scientific">Enterococcus faecalis (strain ATCC 700802 / V583)</name>
    <dbReference type="NCBI Taxonomy" id="226185"/>
    <lineage>
        <taxon>Bacteria</taxon>
        <taxon>Bacillati</taxon>
        <taxon>Bacillota</taxon>
        <taxon>Bacilli</taxon>
        <taxon>Lactobacillales</taxon>
        <taxon>Enterococcaceae</taxon>
        <taxon>Enterococcus</taxon>
    </lineage>
</organism>
<comment type="function">
    <text evidence="1">Catalyzes the attachment of tyrosine to tRNA(Tyr) in a two-step reaction: tyrosine is first activated by ATP to form Tyr-AMP and then transferred to the acceptor end of tRNA(Tyr).</text>
</comment>
<comment type="catalytic activity">
    <reaction evidence="1">
        <text>tRNA(Tyr) + L-tyrosine + ATP = L-tyrosyl-tRNA(Tyr) + AMP + diphosphate + H(+)</text>
        <dbReference type="Rhea" id="RHEA:10220"/>
        <dbReference type="Rhea" id="RHEA-COMP:9706"/>
        <dbReference type="Rhea" id="RHEA-COMP:9707"/>
        <dbReference type="ChEBI" id="CHEBI:15378"/>
        <dbReference type="ChEBI" id="CHEBI:30616"/>
        <dbReference type="ChEBI" id="CHEBI:33019"/>
        <dbReference type="ChEBI" id="CHEBI:58315"/>
        <dbReference type="ChEBI" id="CHEBI:78442"/>
        <dbReference type="ChEBI" id="CHEBI:78536"/>
        <dbReference type="ChEBI" id="CHEBI:456215"/>
        <dbReference type="EC" id="6.1.1.1"/>
    </reaction>
</comment>
<comment type="subunit">
    <text evidence="1">Homodimer.</text>
</comment>
<comment type="subcellular location">
    <subcellularLocation>
        <location evidence="1">Cytoplasm</location>
    </subcellularLocation>
</comment>
<comment type="similarity">
    <text evidence="1">Belongs to the class-I aminoacyl-tRNA synthetase family. TyrS type 1 subfamily.</text>
</comment>
<gene>
    <name evidence="1" type="primary">tyrS2</name>
    <name type="synonym">tyrS-2</name>
    <name type="ordered locus">EF_1739</name>
</gene>
<reference key="1">
    <citation type="journal article" date="2003" name="Science">
        <title>Role of mobile DNA in the evolution of vancomycin-resistant Enterococcus faecalis.</title>
        <authorList>
            <person name="Paulsen I.T."/>
            <person name="Banerjei L."/>
            <person name="Myers G.S.A."/>
            <person name="Nelson K.E."/>
            <person name="Seshadri R."/>
            <person name="Read T.D."/>
            <person name="Fouts D.E."/>
            <person name="Eisen J.A."/>
            <person name="Gill S.R."/>
            <person name="Heidelberg J.F."/>
            <person name="Tettelin H."/>
            <person name="Dodson R.J."/>
            <person name="Umayam L.A."/>
            <person name="Brinkac L.M."/>
            <person name="Beanan M.J."/>
            <person name="Daugherty S.C."/>
            <person name="DeBoy R.T."/>
            <person name="Durkin S.A."/>
            <person name="Kolonay J.F."/>
            <person name="Madupu R."/>
            <person name="Nelson W.C."/>
            <person name="Vamathevan J.J."/>
            <person name="Tran B."/>
            <person name="Upton J."/>
            <person name="Hansen T."/>
            <person name="Shetty J."/>
            <person name="Khouri H.M."/>
            <person name="Utterback T.R."/>
            <person name="Radune D."/>
            <person name="Ketchum K.A."/>
            <person name="Dougherty B.A."/>
            <person name="Fraser C.M."/>
        </authorList>
    </citation>
    <scope>NUCLEOTIDE SEQUENCE [LARGE SCALE GENOMIC DNA]</scope>
    <source>
        <strain>ATCC 700802 / V583</strain>
    </source>
</reference>
<name>SYY2_ENTFA</name>
<keyword id="KW-0030">Aminoacyl-tRNA synthetase</keyword>
<keyword id="KW-0067">ATP-binding</keyword>
<keyword id="KW-0963">Cytoplasm</keyword>
<keyword id="KW-0436">Ligase</keyword>
<keyword id="KW-0547">Nucleotide-binding</keyword>
<keyword id="KW-0648">Protein biosynthesis</keyword>
<keyword id="KW-1185">Reference proteome</keyword>
<keyword id="KW-0694">RNA-binding</keyword>
<sequence length="420" mass="47637">MNSAFFEELKARGLVYQVTDEEALQKQLNEESVKLYIGFDPTADSLHIGHLLPILMLRRFQQNGHVPIALVGGGTGMIGDPSFKDAERSLNTLDTVKAWSESIKGQLSRFIDFEDEKNPAILANNYDWLGELSLIDFLRDVGKNFTINYMMSKESVKRRIETGISYTEFAYQLLQAYDFLKLYETEGCLLQLGGSDQWGNITSGIELLRREQEVQGFGLTMPLITKADGTKFGKTEGNAVWLDAEKTSPYEFYQFWINTDDRDVVKFLKYFTFLTLDEIATIEEEFTANPGQRAAQKALAKEVTTLVHGEAAYHQAVKISEALFSGDIQSLTAEEIKQGFKDVPTYEVQPEDQLSLVDLLVTSKIEPSKRQAREDVQNGAIYVNGERRQDLAAELTETDKIEGQFTVIRRGKKKYFLLKY</sequence>
<protein>
    <recommendedName>
        <fullName evidence="1">Tyrosine--tRNA ligase 2</fullName>
        <ecNumber evidence="1">6.1.1.1</ecNumber>
    </recommendedName>
    <alternativeName>
        <fullName evidence="1">Tyrosyl-tRNA synthetase 2</fullName>
        <shortName evidence="1">TyrRS 2</shortName>
    </alternativeName>
</protein>
<feature type="chain" id="PRO_0000234709" description="Tyrosine--tRNA ligase 2">
    <location>
        <begin position="1"/>
        <end position="420"/>
    </location>
</feature>
<feature type="domain" description="S4 RNA-binding" evidence="1">
    <location>
        <begin position="354"/>
        <end position="420"/>
    </location>
</feature>
<feature type="short sequence motif" description="'HIGH' region">
    <location>
        <begin position="41"/>
        <end position="50"/>
    </location>
</feature>
<feature type="short sequence motif" description="'KMSKS' region">
    <location>
        <begin position="231"/>
        <end position="235"/>
    </location>
</feature>
<feature type="binding site" evidence="1">
    <location>
        <position position="36"/>
    </location>
    <ligand>
        <name>L-tyrosine</name>
        <dbReference type="ChEBI" id="CHEBI:58315"/>
    </ligand>
</feature>
<feature type="binding site" evidence="1">
    <location>
        <position position="171"/>
    </location>
    <ligand>
        <name>L-tyrosine</name>
        <dbReference type="ChEBI" id="CHEBI:58315"/>
    </ligand>
</feature>
<feature type="binding site" evidence="1">
    <location>
        <position position="175"/>
    </location>
    <ligand>
        <name>L-tyrosine</name>
        <dbReference type="ChEBI" id="CHEBI:58315"/>
    </ligand>
</feature>
<feature type="binding site" evidence="1">
    <location>
        <position position="234"/>
    </location>
    <ligand>
        <name>ATP</name>
        <dbReference type="ChEBI" id="CHEBI:30616"/>
    </ligand>
</feature>
<dbReference type="EC" id="6.1.1.1" evidence="1"/>
<dbReference type="EMBL" id="AE016830">
    <property type="protein sequence ID" value="AAO81513.1"/>
    <property type="molecule type" value="Genomic_DNA"/>
</dbReference>
<dbReference type="RefSeq" id="NP_815443.1">
    <property type="nucleotide sequence ID" value="NC_004668.1"/>
</dbReference>
<dbReference type="SMR" id="Q834C7"/>
<dbReference type="STRING" id="226185.EF_1739"/>
<dbReference type="EnsemblBacteria" id="AAO81513">
    <property type="protein sequence ID" value="AAO81513"/>
    <property type="gene ID" value="EF_1739"/>
</dbReference>
<dbReference type="KEGG" id="efa:EF1739"/>
<dbReference type="PATRIC" id="fig|226185.45.peg.1775"/>
<dbReference type="eggNOG" id="COG0162">
    <property type="taxonomic scope" value="Bacteria"/>
</dbReference>
<dbReference type="HOGENOM" id="CLU_024003_0_3_9"/>
<dbReference type="Proteomes" id="UP000001415">
    <property type="component" value="Chromosome"/>
</dbReference>
<dbReference type="GO" id="GO:0005829">
    <property type="term" value="C:cytosol"/>
    <property type="evidence" value="ECO:0007669"/>
    <property type="project" value="TreeGrafter"/>
</dbReference>
<dbReference type="GO" id="GO:0005524">
    <property type="term" value="F:ATP binding"/>
    <property type="evidence" value="ECO:0007669"/>
    <property type="project" value="UniProtKB-UniRule"/>
</dbReference>
<dbReference type="GO" id="GO:0003723">
    <property type="term" value="F:RNA binding"/>
    <property type="evidence" value="ECO:0007669"/>
    <property type="project" value="UniProtKB-KW"/>
</dbReference>
<dbReference type="GO" id="GO:0004831">
    <property type="term" value="F:tyrosine-tRNA ligase activity"/>
    <property type="evidence" value="ECO:0007669"/>
    <property type="project" value="UniProtKB-UniRule"/>
</dbReference>
<dbReference type="GO" id="GO:0006437">
    <property type="term" value="P:tyrosyl-tRNA aminoacylation"/>
    <property type="evidence" value="ECO:0007669"/>
    <property type="project" value="UniProtKB-UniRule"/>
</dbReference>
<dbReference type="CDD" id="cd00165">
    <property type="entry name" value="S4"/>
    <property type="match status" value="1"/>
</dbReference>
<dbReference type="CDD" id="cd00805">
    <property type="entry name" value="TyrRS_core"/>
    <property type="match status" value="1"/>
</dbReference>
<dbReference type="FunFam" id="1.10.240.10:FF:000001">
    <property type="entry name" value="Tyrosine--tRNA ligase"/>
    <property type="match status" value="1"/>
</dbReference>
<dbReference type="FunFam" id="3.10.290.10:FF:000012">
    <property type="entry name" value="Tyrosine--tRNA ligase"/>
    <property type="match status" value="1"/>
</dbReference>
<dbReference type="FunFam" id="3.40.50.620:FF:000008">
    <property type="entry name" value="Tyrosine--tRNA ligase"/>
    <property type="match status" value="1"/>
</dbReference>
<dbReference type="Gene3D" id="3.40.50.620">
    <property type="entry name" value="HUPs"/>
    <property type="match status" value="1"/>
</dbReference>
<dbReference type="Gene3D" id="3.10.290.10">
    <property type="entry name" value="RNA-binding S4 domain"/>
    <property type="match status" value="1"/>
</dbReference>
<dbReference type="Gene3D" id="1.10.240.10">
    <property type="entry name" value="Tyrosyl-Transfer RNA Synthetase"/>
    <property type="match status" value="1"/>
</dbReference>
<dbReference type="HAMAP" id="MF_02006">
    <property type="entry name" value="Tyr_tRNA_synth_type1"/>
    <property type="match status" value="1"/>
</dbReference>
<dbReference type="InterPro" id="IPR001412">
    <property type="entry name" value="aa-tRNA-synth_I_CS"/>
</dbReference>
<dbReference type="InterPro" id="IPR002305">
    <property type="entry name" value="aa-tRNA-synth_Ic"/>
</dbReference>
<dbReference type="InterPro" id="IPR014729">
    <property type="entry name" value="Rossmann-like_a/b/a_fold"/>
</dbReference>
<dbReference type="InterPro" id="IPR002942">
    <property type="entry name" value="S4_RNA-bd"/>
</dbReference>
<dbReference type="InterPro" id="IPR036986">
    <property type="entry name" value="S4_RNA-bd_sf"/>
</dbReference>
<dbReference type="InterPro" id="IPR054608">
    <property type="entry name" value="SYY-like_C"/>
</dbReference>
<dbReference type="InterPro" id="IPR002307">
    <property type="entry name" value="Tyr-tRNA-ligase"/>
</dbReference>
<dbReference type="InterPro" id="IPR024088">
    <property type="entry name" value="Tyr-tRNA-ligase_bac-type"/>
</dbReference>
<dbReference type="InterPro" id="IPR024107">
    <property type="entry name" value="Tyr-tRNA-ligase_bac_1"/>
</dbReference>
<dbReference type="NCBIfam" id="TIGR00234">
    <property type="entry name" value="tyrS"/>
    <property type="match status" value="1"/>
</dbReference>
<dbReference type="PANTHER" id="PTHR11766:SF0">
    <property type="entry name" value="TYROSINE--TRNA LIGASE, MITOCHONDRIAL"/>
    <property type="match status" value="1"/>
</dbReference>
<dbReference type="PANTHER" id="PTHR11766">
    <property type="entry name" value="TYROSYL-TRNA SYNTHETASE"/>
    <property type="match status" value="1"/>
</dbReference>
<dbReference type="Pfam" id="PF22421">
    <property type="entry name" value="SYY_C-terminal"/>
    <property type="match status" value="1"/>
</dbReference>
<dbReference type="Pfam" id="PF00579">
    <property type="entry name" value="tRNA-synt_1b"/>
    <property type="match status" value="1"/>
</dbReference>
<dbReference type="PRINTS" id="PR01040">
    <property type="entry name" value="TRNASYNTHTYR"/>
</dbReference>
<dbReference type="SMART" id="SM00363">
    <property type="entry name" value="S4"/>
    <property type="match status" value="1"/>
</dbReference>
<dbReference type="SUPFAM" id="SSF55174">
    <property type="entry name" value="Alpha-L RNA-binding motif"/>
    <property type="match status" value="1"/>
</dbReference>
<dbReference type="SUPFAM" id="SSF52374">
    <property type="entry name" value="Nucleotidylyl transferase"/>
    <property type="match status" value="1"/>
</dbReference>
<dbReference type="PROSITE" id="PS00178">
    <property type="entry name" value="AA_TRNA_LIGASE_I"/>
    <property type="match status" value="1"/>
</dbReference>
<dbReference type="PROSITE" id="PS50889">
    <property type="entry name" value="S4"/>
    <property type="match status" value="1"/>
</dbReference>
<accession>Q834C7</accession>
<evidence type="ECO:0000255" key="1">
    <source>
        <dbReference type="HAMAP-Rule" id="MF_02006"/>
    </source>
</evidence>